<reference key="1">
    <citation type="journal article" date="2009" name="Genome Biol.">
        <title>Genomic and genetic analyses of diversity and plant interactions of Pseudomonas fluorescens.</title>
        <authorList>
            <person name="Silby M.W."/>
            <person name="Cerdeno-Tarraga A.M."/>
            <person name="Vernikos G.S."/>
            <person name="Giddens S.R."/>
            <person name="Jackson R.W."/>
            <person name="Preston G.M."/>
            <person name="Zhang X.-X."/>
            <person name="Moon C.D."/>
            <person name="Gehrig S.M."/>
            <person name="Godfrey S.A.C."/>
            <person name="Knight C.G."/>
            <person name="Malone J.G."/>
            <person name="Robinson Z."/>
            <person name="Spiers A.J."/>
            <person name="Harris S."/>
            <person name="Challis G.L."/>
            <person name="Yaxley A.M."/>
            <person name="Harris D."/>
            <person name="Seeger K."/>
            <person name="Murphy L."/>
            <person name="Rutter S."/>
            <person name="Squares R."/>
            <person name="Quail M.A."/>
            <person name="Saunders E."/>
            <person name="Mavromatis K."/>
            <person name="Brettin T.S."/>
            <person name="Bentley S.D."/>
            <person name="Hothersall J."/>
            <person name="Stephens E."/>
            <person name="Thomas C.M."/>
            <person name="Parkhill J."/>
            <person name="Levy S.B."/>
            <person name="Rainey P.B."/>
            <person name="Thomson N.R."/>
        </authorList>
    </citation>
    <scope>NUCLEOTIDE SEQUENCE [LARGE SCALE GENOMIC DNA]</scope>
    <source>
        <strain>Pf0-1</strain>
    </source>
</reference>
<comment type="catalytic activity">
    <reaction evidence="1">
        <text>tRNA(Leu) + L-leucine + ATP = L-leucyl-tRNA(Leu) + AMP + diphosphate</text>
        <dbReference type="Rhea" id="RHEA:11688"/>
        <dbReference type="Rhea" id="RHEA-COMP:9613"/>
        <dbReference type="Rhea" id="RHEA-COMP:9622"/>
        <dbReference type="ChEBI" id="CHEBI:30616"/>
        <dbReference type="ChEBI" id="CHEBI:33019"/>
        <dbReference type="ChEBI" id="CHEBI:57427"/>
        <dbReference type="ChEBI" id="CHEBI:78442"/>
        <dbReference type="ChEBI" id="CHEBI:78494"/>
        <dbReference type="ChEBI" id="CHEBI:456215"/>
        <dbReference type="EC" id="6.1.1.4"/>
    </reaction>
</comment>
<comment type="subcellular location">
    <subcellularLocation>
        <location evidence="1">Cytoplasm</location>
    </subcellularLocation>
</comment>
<comment type="similarity">
    <text evidence="1">Belongs to the class-I aminoacyl-tRNA synthetase family.</text>
</comment>
<dbReference type="EC" id="6.1.1.4" evidence="1"/>
<dbReference type="EMBL" id="CP000094">
    <property type="protein sequence ID" value="ABA76694.1"/>
    <property type="molecule type" value="Genomic_DNA"/>
</dbReference>
<dbReference type="RefSeq" id="WP_011336089.1">
    <property type="nucleotide sequence ID" value="NC_007492.2"/>
</dbReference>
<dbReference type="SMR" id="Q3K6B0"/>
<dbReference type="KEGG" id="pfo:Pfl01_4957"/>
<dbReference type="eggNOG" id="COG0495">
    <property type="taxonomic scope" value="Bacteria"/>
</dbReference>
<dbReference type="HOGENOM" id="CLU_004427_0_0_6"/>
<dbReference type="Proteomes" id="UP000002704">
    <property type="component" value="Chromosome"/>
</dbReference>
<dbReference type="GO" id="GO:0005829">
    <property type="term" value="C:cytosol"/>
    <property type="evidence" value="ECO:0007669"/>
    <property type="project" value="TreeGrafter"/>
</dbReference>
<dbReference type="GO" id="GO:0002161">
    <property type="term" value="F:aminoacyl-tRNA deacylase activity"/>
    <property type="evidence" value="ECO:0007669"/>
    <property type="project" value="InterPro"/>
</dbReference>
<dbReference type="GO" id="GO:0005524">
    <property type="term" value="F:ATP binding"/>
    <property type="evidence" value="ECO:0007669"/>
    <property type="project" value="UniProtKB-UniRule"/>
</dbReference>
<dbReference type="GO" id="GO:0004823">
    <property type="term" value="F:leucine-tRNA ligase activity"/>
    <property type="evidence" value="ECO:0007669"/>
    <property type="project" value="UniProtKB-UniRule"/>
</dbReference>
<dbReference type="GO" id="GO:0006429">
    <property type="term" value="P:leucyl-tRNA aminoacylation"/>
    <property type="evidence" value="ECO:0007669"/>
    <property type="project" value="UniProtKB-UniRule"/>
</dbReference>
<dbReference type="CDD" id="cd07958">
    <property type="entry name" value="Anticodon_Ia_Leu_BEm"/>
    <property type="match status" value="1"/>
</dbReference>
<dbReference type="CDD" id="cd00812">
    <property type="entry name" value="LeuRS_core"/>
    <property type="match status" value="1"/>
</dbReference>
<dbReference type="FunFam" id="1.10.730.10:FF:000003">
    <property type="entry name" value="Leucine--tRNA ligase"/>
    <property type="match status" value="1"/>
</dbReference>
<dbReference type="FunFam" id="2.20.28.290:FF:000001">
    <property type="entry name" value="Leucine--tRNA ligase"/>
    <property type="match status" value="1"/>
</dbReference>
<dbReference type="FunFam" id="3.10.20.590:FF:000001">
    <property type="entry name" value="Leucine--tRNA ligase"/>
    <property type="match status" value="1"/>
</dbReference>
<dbReference type="FunFam" id="3.40.50.620:FF:000003">
    <property type="entry name" value="Leucine--tRNA ligase"/>
    <property type="match status" value="1"/>
</dbReference>
<dbReference type="FunFam" id="3.40.50.620:FF:000056">
    <property type="entry name" value="Leucine--tRNA ligase"/>
    <property type="match status" value="1"/>
</dbReference>
<dbReference type="FunFam" id="3.90.740.10:FF:000012">
    <property type="entry name" value="Leucine--tRNA ligase"/>
    <property type="match status" value="1"/>
</dbReference>
<dbReference type="Gene3D" id="2.20.28.290">
    <property type="match status" value="1"/>
</dbReference>
<dbReference type="Gene3D" id="3.10.20.590">
    <property type="match status" value="1"/>
</dbReference>
<dbReference type="Gene3D" id="3.40.50.620">
    <property type="entry name" value="HUPs"/>
    <property type="match status" value="2"/>
</dbReference>
<dbReference type="Gene3D" id="1.10.730.10">
    <property type="entry name" value="Isoleucyl-tRNA Synthetase, Domain 1"/>
    <property type="match status" value="1"/>
</dbReference>
<dbReference type="Gene3D" id="3.90.740.10">
    <property type="entry name" value="Valyl/Leucyl/Isoleucyl-tRNA synthetase, editing domain"/>
    <property type="match status" value="1"/>
</dbReference>
<dbReference type="HAMAP" id="MF_00049_B">
    <property type="entry name" value="Leu_tRNA_synth_B"/>
    <property type="match status" value="1"/>
</dbReference>
<dbReference type="InterPro" id="IPR001412">
    <property type="entry name" value="aa-tRNA-synth_I_CS"/>
</dbReference>
<dbReference type="InterPro" id="IPR002300">
    <property type="entry name" value="aa-tRNA-synth_Ia"/>
</dbReference>
<dbReference type="InterPro" id="IPR002302">
    <property type="entry name" value="Leu-tRNA-ligase"/>
</dbReference>
<dbReference type="InterPro" id="IPR025709">
    <property type="entry name" value="Leu_tRNA-synth_edit"/>
</dbReference>
<dbReference type="InterPro" id="IPR013155">
    <property type="entry name" value="M/V/L/I-tRNA-synth_anticd-bd"/>
</dbReference>
<dbReference type="InterPro" id="IPR015413">
    <property type="entry name" value="Methionyl/Leucyl_tRNA_Synth"/>
</dbReference>
<dbReference type="InterPro" id="IPR014729">
    <property type="entry name" value="Rossmann-like_a/b/a_fold"/>
</dbReference>
<dbReference type="InterPro" id="IPR009080">
    <property type="entry name" value="tRNAsynth_Ia_anticodon-bd"/>
</dbReference>
<dbReference type="InterPro" id="IPR009008">
    <property type="entry name" value="Val/Leu/Ile-tRNA-synth_edit"/>
</dbReference>
<dbReference type="NCBIfam" id="TIGR00396">
    <property type="entry name" value="leuS_bact"/>
    <property type="match status" value="1"/>
</dbReference>
<dbReference type="PANTHER" id="PTHR43740:SF2">
    <property type="entry name" value="LEUCINE--TRNA LIGASE, MITOCHONDRIAL"/>
    <property type="match status" value="1"/>
</dbReference>
<dbReference type="PANTHER" id="PTHR43740">
    <property type="entry name" value="LEUCYL-TRNA SYNTHETASE"/>
    <property type="match status" value="1"/>
</dbReference>
<dbReference type="Pfam" id="PF08264">
    <property type="entry name" value="Anticodon_1"/>
    <property type="match status" value="1"/>
</dbReference>
<dbReference type="Pfam" id="PF00133">
    <property type="entry name" value="tRNA-synt_1"/>
    <property type="match status" value="2"/>
</dbReference>
<dbReference type="Pfam" id="PF13603">
    <property type="entry name" value="tRNA-synt_1_2"/>
    <property type="match status" value="1"/>
</dbReference>
<dbReference type="Pfam" id="PF09334">
    <property type="entry name" value="tRNA-synt_1g"/>
    <property type="match status" value="1"/>
</dbReference>
<dbReference type="PRINTS" id="PR00985">
    <property type="entry name" value="TRNASYNTHLEU"/>
</dbReference>
<dbReference type="SUPFAM" id="SSF47323">
    <property type="entry name" value="Anticodon-binding domain of a subclass of class I aminoacyl-tRNA synthetases"/>
    <property type="match status" value="1"/>
</dbReference>
<dbReference type="SUPFAM" id="SSF52374">
    <property type="entry name" value="Nucleotidylyl transferase"/>
    <property type="match status" value="1"/>
</dbReference>
<dbReference type="SUPFAM" id="SSF50677">
    <property type="entry name" value="ValRS/IleRS/LeuRS editing domain"/>
    <property type="match status" value="1"/>
</dbReference>
<dbReference type="PROSITE" id="PS00178">
    <property type="entry name" value="AA_TRNA_LIGASE_I"/>
    <property type="match status" value="1"/>
</dbReference>
<gene>
    <name evidence="1" type="primary">leuS</name>
    <name type="ordered locus">Pfl01_4957</name>
</gene>
<accession>Q3K6B0</accession>
<name>SYL_PSEPF</name>
<feature type="chain" id="PRO_1000202226" description="Leucine--tRNA ligase">
    <location>
        <begin position="1"/>
        <end position="868"/>
    </location>
</feature>
<feature type="short sequence motif" description="'HIGH' region">
    <location>
        <begin position="42"/>
        <end position="52"/>
    </location>
</feature>
<feature type="short sequence motif" description="'KMSKS' region">
    <location>
        <begin position="627"/>
        <end position="631"/>
    </location>
</feature>
<feature type="binding site" evidence="1">
    <location>
        <position position="630"/>
    </location>
    <ligand>
        <name>ATP</name>
        <dbReference type="ChEBI" id="CHEBI:30616"/>
    </ligand>
</feature>
<keyword id="KW-0030">Aminoacyl-tRNA synthetase</keyword>
<keyword id="KW-0067">ATP-binding</keyword>
<keyword id="KW-0963">Cytoplasm</keyword>
<keyword id="KW-0436">Ligase</keyword>
<keyword id="KW-0547">Nucleotide-binding</keyword>
<keyword id="KW-0648">Protein biosynthesis</keyword>
<organism>
    <name type="scientific">Pseudomonas fluorescens (strain Pf0-1)</name>
    <dbReference type="NCBI Taxonomy" id="205922"/>
    <lineage>
        <taxon>Bacteria</taxon>
        <taxon>Pseudomonadati</taxon>
        <taxon>Pseudomonadota</taxon>
        <taxon>Gammaproteobacteria</taxon>
        <taxon>Pseudomonadales</taxon>
        <taxon>Pseudomonadaceae</taxon>
        <taxon>Pseudomonas</taxon>
    </lineage>
</organism>
<protein>
    <recommendedName>
        <fullName evidence="1">Leucine--tRNA ligase</fullName>
        <ecNumber evidence="1">6.1.1.4</ecNumber>
    </recommendedName>
    <alternativeName>
        <fullName evidence="1">Leucyl-tRNA synthetase</fullName>
        <shortName evidence="1">LeuRS</shortName>
    </alternativeName>
</protein>
<evidence type="ECO:0000255" key="1">
    <source>
        <dbReference type="HAMAP-Rule" id="MF_00049"/>
    </source>
</evidence>
<proteinExistence type="inferred from homology"/>
<sequence length="868" mass="97095">MHEQYQPREIEAAAQSFWDEQKSFEVSEQPGKETYYCLSMFPYPSGKLHMGHVRNYTIGDVISRYQRMLGKNVLQPMGWDAFGMPAENAAMKNNVAPAKWTYENIAYMKSQLRSLGLAVDWSREVTTCKPDYYRWEQWLFTRLFEKGVIYRKNGTVNWDPIDQTVLANEQVIDGRGWRSGALIEKREIPMYYFKITAYADELLESLDELTGWPEQVKTMQRNWIGKSRGMEVQFPYNVDSIGESGTLKVFTTRPDTLMGATYVAVAAEHHLAALAAKNNPELQAFIAECKGGSVAEADVATQEKKGLPTGLFVEHPLTGEKLPVWVANYVLMHYGDGAVMAVPAHDERDFEFAHKYNLPVKSVVRTSSGDTNPAPWQDAYGEHGTLINSGEFDGLDFAGAFDAMEVALIKKNLGASRTQFRLRDWGISRQRYWGCPIPIIHCDACGDVPVPEDQLPVVLPEDVVPDGAGSPLARMPEFYECTCPKCGQPAKRETDTMDTFVESSWYYARYASPHFEGGLVEKSAADHWLPVDQYIGGIEHAILHLLYARFFHKLMRDEGLVSSNEPFKNLLTQGMVVAETYYRREANGAYTWFNPADVELERDSKAKVISAKLIADGLPVEIGGTEKMAKSKNNGVDPQSMIDQFGADTCRLFMMFASPPDMSAEWSDSGVEGSHRFLKRVWRLAQAHITQGLPGKLDIASLNDEQKVIRRAIHQAIKQASHDVGQNHKFNTAIAQVMTLMNVLEKAAQATEQDRALVQEGLETVTLLLAPITPHISHELWNRLGHADPVIDASWPVLDESALVQDSLTLVIQVNGKLRGQIEMPAAATREEVEAAARANENVLRFVDGLTIRKVIVVPGKLVNIVAS</sequence>